<organism>
    <name type="scientific">Euglena gracilis</name>
    <dbReference type="NCBI Taxonomy" id="3039"/>
    <lineage>
        <taxon>Eukaryota</taxon>
        <taxon>Discoba</taxon>
        <taxon>Euglenozoa</taxon>
        <taxon>Euglenida</taxon>
        <taxon>Spirocuta</taxon>
        <taxon>Euglenophyceae</taxon>
        <taxon>Euglenales</taxon>
        <taxon>Euglenaceae</taxon>
        <taxon>Euglena</taxon>
    </lineage>
</organism>
<reference evidence="6 7" key="1">
    <citation type="journal article" date="2005" name="Photochem. Photobiol. Sci.">
        <title>Photoactivated adenylyl cyclase (PAC) genes in the flagellate Euglena gracilis mutant strains.</title>
        <authorList>
            <person name="Ntefidou M."/>
            <person name="Haeder D.-P."/>
        </authorList>
    </citation>
    <scope>NUCLEOTIDE SEQUENCE [MRNA]</scope>
    <scope>SUBCELLULAR LOCATION</scope>
    <source>
        <strain evidence="5">FB</strain>
    </source>
</reference>
<feature type="chain" id="PRO_0000195724" description="Photoactivated adenylate cyclase subunit beta-like protein FB">
    <location>
        <begin position="1"/>
        <end position="859"/>
    </location>
</feature>
<feature type="domain" description="BLUF 1" evidence="2">
    <location>
        <begin position="56"/>
        <end position="149"/>
    </location>
</feature>
<feature type="domain" description="Guanylate cyclase 1" evidence="3">
    <location>
        <begin position="205"/>
        <end position="333"/>
    </location>
</feature>
<feature type="domain" description="BLUF 2" evidence="2">
    <location>
        <begin position="471"/>
        <end position="563"/>
    </location>
</feature>
<feature type="domain" description="Guanylate cyclase 2" evidence="3">
    <location>
        <begin position="619"/>
        <end position="748"/>
    </location>
</feature>
<feature type="region of interest" description="Disordered" evidence="4">
    <location>
        <begin position="414"/>
        <end position="449"/>
    </location>
</feature>
<feature type="region of interest" description="Disordered" evidence="4">
    <location>
        <begin position="813"/>
        <end position="859"/>
    </location>
</feature>
<feature type="compositionally biased region" description="Basic and acidic residues" evidence="4">
    <location>
        <begin position="815"/>
        <end position="831"/>
    </location>
</feature>
<feature type="compositionally biased region" description="Polar residues" evidence="4">
    <location>
        <begin position="846"/>
        <end position="859"/>
    </location>
</feature>
<protein>
    <recommendedName>
        <fullName>Photoactivated adenylate cyclase subunit beta-like protein FB</fullName>
    </recommendedName>
</protein>
<gene>
    <name evidence="7" type="primary">pacB</name>
</gene>
<sequence>MYILVWKKGQQIKTFHTLDEAAQFKAASNIDEAQMFSVTVAPAISASGGSNEATNLRRLMYLSKSTNPEECNPQFLAEMARVATIRNREIGVSGFLMYSSPFSFQVIEGTDEDLDFLFAKISADPRHERCIVLANGPCTGRMYGDWHMKDSHMDSITTHPAMKTILYQIARSFSSMWSYLPKSAGNMLLLGKDPAAQPPEPMSVVVTFIYLVEFGSILSNPNLTDQAAEVLSTFVDVCVKNVEGSGGNIAKFITGICMAYWPINRTEEALTAIQQISEDLAQLRSQQAPGSAVSLMYSQAGVHYGRPMLCNAGRRKSDFTLLGDCINTTSRIATLAKKFKTPLLFSQEVRCLLRDEMREEIVGAGMHQVKGRDKPVVVYQFPGPELDVEMVRQKIEQFTPGRFRCQMPVVEYEGLPNSQRPPIFDDTPKANRRPRTPGYGGRQRSDSQVDRPIMIAKLAGPSVSATGDTTLTTLTYISQATRPMSRQDLSAIMRTATRRNAQQSITGTLLHVNGLFVQTLEGPKDAVANLYLRVRQDPRQTDVTTVHMAPLQERVYPSEWTLTSATAEMLATFPPLQDVLAQLAKSFTSLETYVPSTVVRHLTAGNNPRNLMPVSCGVVMLATDICSFTSLTEKSSLTEVWMICNTFIDACTSAICQDGREVIKLIGDCVTAYSPGNNADSAVAAAQELFTFCRQLREAFVDVLDVRGCVSCGVGLEYGQVVMAQCGSMGLTEYVVAGAVSARVMEVEAITREVGYAIVVTEPVADRLSPQLRDHGIVPTPQAIEGLPCYGIAGEEFELDVDSIKRGIKALHAARSGEKPLTEPEAAKPDFRVSPGRVRHGDSGRRSNSAQGKRSIQVR</sequence>
<comment type="subunit">
    <text evidence="1">Heterotetramer of two alpha and two beta subunits.</text>
</comment>
<comment type="subcellular location">
    <subcellularLocation>
        <location evidence="5">Cell projection</location>
        <location evidence="5">Cilium</location>
        <location evidence="5">Flagellum</location>
    </subcellularLocation>
    <text>Paraxonemal body. And paraxonemal bodies (PABs).</text>
</comment>
<comment type="miscellaneous">
    <text>The FB strain is deficient in phototaxis. It is not known if this is due to defective adenylate cyclase activity or defective BLUF domains in this protein. In wild-type E.gracilis, photoactivated adenylate cyclase is found in the paraxonemal bodies (PABs). PABs are not visible in all cells in this strain, and are smaller than in wild-type.</text>
</comment>
<comment type="similarity">
    <text evidence="3">Belongs to the adenylyl cyclase class-4/guanylyl cyclase family.</text>
</comment>
<proteinExistence type="evidence at transcript level"/>
<accession>P84741</accession>
<accession>Q2P9M6</accession>
<dbReference type="EMBL" id="AM181339">
    <property type="protein sequence ID" value="CAJ57398.1"/>
    <property type="molecule type" value="mRNA"/>
</dbReference>
<dbReference type="SMR" id="P84741"/>
<dbReference type="GO" id="GO:0031514">
    <property type="term" value="C:motile cilium"/>
    <property type="evidence" value="ECO:0000314"/>
    <property type="project" value="UniProtKB"/>
</dbReference>
<dbReference type="GO" id="GO:0009882">
    <property type="term" value="F:blue light photoreceptor activity"/>
    <property type="evidence" value="ECO:0007669"/>
    <property type="project" value="InterPro"/>
</dbReference>
<dbReference type="GO" id="GO:0071949">
    <property type="term" value="F:FAD binding"/>
    <property type="evidence" value="ECO:0007669"/>
    <property type="project" value="InterPro"/>
</dbReference>
<dbReference type="GO" id="GO:0009190">
    <property type="term" value="P:cyclic nucleotide biosynthetic process"/>
    <property type="evidence" value="ECO:0007669"/>
    <property type="project" value="InterPro"/>
</dbReference>
<dbReference type="CDD" id="cd07302">
    <property type="entry name" value="CHD"/>
    <property type="match status" value="2"/>
</dbReference>
<dbReference type="FunFam" id="3.30.70.1230:FF:000065">
    <property type="entry name" value="Photoactivated adenylate cyclase subunit alpha-like protein ST"/>
    <property type="match status" value="1"/>
</dbReference>
<dbReference type="FunFam" id="3.30.70.100:FF:000061">
    <property type="entry name" value="Photoactivated adenylate cyclase subunit beta-like protein 1224-5/1F"/>
    <property type="match status" value="1"/>
</dbReference>
<dbReference type="FunFam" id="3.30.70.1230:FF:000058">
    <property type="entry name" value="Photoactivated adenylate cyclase subunit beta-like protein FB"/>
    <property type="match status" value="1"/>
</dbReference>
<dbReference type="FunFam" id="3.30.70.100:FF:000064">
    <property type="entry name" value="Photoactivated adenylate cyclase subunit beta-like protein ST"/>
    <property type="match status" value="1"/>
</dbReference>
<dbReference type="Gene3D" id="3.30.70.100">
    <property type="match status" value="2"/>
</dbReference>
<dbReference type="Gene3D" id="3.30.70.1230">
    <property type="entry name" value="Nucleotide cyclase"/>
    <property type="match status" value="2"/>
</dbReference>
<dbReference type="InterPro" id="IPR001054">
    <property type="entry name" value="A/G_cyclase"/>
</dbReference>
<dbReference type="InterPro" id="IPR036046">
    <property type="entry name" value="Acylphosphatase-like_dom_sf"/>
</dbReference>
<dbReference type="InterPro" id="IPR050697">
    <property type="entry name" value="Adenylyl/Guanylyl_Cyclase_3/4"/>
</dbReference>
<dbReference type="InterPro" id="IPR007024">
    <property type="entry name" value="BLUF_domain"/>
</dbReference>
<dbReference type="InterPro" id="IPR029787">
    <property type="entry name" value="Nucleotide_cyclase"/>
</dbReference>
<dbReference type="PANTHER" id="PTHR43081:SF1">
    <property type="entry name" value="ADENYLATE CYCLASE, TERMINAL-DIFFERENTIATION SPECIFIC"/>
    <property type="match status" value="1"/>
</dbReference>
<dbReference type="PANTHER" id="PTHR43081">
    <property type="entry name" value="ADENYLATE CYCLASE, TERMINAL-DIFFERENTIATION SPECIFIC-RELATED"/>
    <property type="match status" value="1"/>
</dbReference>
<dbReference type="Pfam" id="PF04940">
    <property type="entry name" value="BLUF"/>
    <property type="match status" value="2"/>
</dbReference>
<dbReference type="Pfam" id="PF00211">
    <property type="entry name" value="Guanylate_cyc"/>
    <property type="match status" value="1"/>
</dbReference>
<dbReference type="SMART" id="SM01034">
    <property type="entry name" value="BLUF"/>
    <property type="match status" value="2"/>
</dbReference>
<dbReference type="SUPFAM" id="SSF54975">
    <property type="entry name" value="Acylphosphatase/BLUF domain-like"/>
    <property type="match status" value="2"/>
</dbReference>
<dbReference type="SUPFAM" id="SSF55073">
    <property type="entry name" value="Nucleotide cyclase"/>
    <property type="match status" value="2"/>
</dbReference>
<dbReference type="PROSITE" id="PS50925">
    <property type="entry name" value="BLUF"/>
    <property type="match status" value="2"/>
</dbReference>
<dbReference type="PROSITE" id="PS50125">
    <property type="entry name" value="GUANYLATE_CYCLASE_2"/>
    <property type="match status" value="2"/>
</dbReference>
<name>PBLFB_EUGGR</name>
<keyword id="KW-0966">Cell projection</keyword>
<keyword id="KW-0969">Cilium</keyword>
<keyword id="KW-0282">Flagellum</keyword>
<keyword id="KW-0677">Repeat</keyword>
<evidence type="ECO:0000250" key="1">
    <source>
        <dbReference type="UniProtKB" id="Q8S9F1"/>
    </source>
</evidence>
<evidence type="ECO:0000255" key="2">
    <source>
        <dbReference type="PROSITE-ProRule" id="PRU00030"/>
    </source>
</evidence>
<evidence type="ECO:0000255" key="3">
    <source>
        <dbReference type="PROSITE-ProRule" id="PRU00099"/>
    </source>
</evidence>
<evidence type="ECO:0000256" key="4">
    <source>
        <dbReference type="SAM" id="MobiDB-lite"/>
    </source>
</evidence>
<evidence type="ECO:0000269" key="5">
    <source>
    </source>
</evidence>
<evidence type="ECO:0000305" key="6"/>
<evidence type="ECO:0000312" key="7">
    <source>
        <dbReference type="EMBL" id="CAJ57398.1"/>
    </source>
</evidence>